<gene>
    <name type="primary">pic1</name>
    <name type="ORF">SPBC336.15</name>
    <name type="ORF">SPBC685.01</name>
</gene>
<reference key="1">
    <citation type="journal article" date="2002" name="Nature">
        <title>The genome sequence of Schizosaccharomyces pombe.</title>
        <authorList>
            <person name="Wood V."/>
            <person name="Gwilliam R."/>
            <person name="Rajandream M.A."/>
            <person name="Lyne M.H."/>
            <person name="Lyne R."/>
            <person name="Stewart A."/>
            <person name="Sgouros J.G."/>
            <person name="Peat N."/>
            <person name="Hayles J."/>
            <person name="Baker S.G."/>
            <person name="Basham D."/>
            <person name="Bowman S."/>
            <person name="Brooks K."/>
            <person name="Brown D."/>
            <person name="Brown S."/>
            <person name="Chillingworth T."/>
            <person name="Churcher C.M."/>
            <person name="Collins M."/>
            <person name="Connor R."/>
            <person name="Cronin A."/>
            <person name="Davis P."/>
            <person name="Feltwell T."/>
            <person name="Fraser A."/>
            <person name="Gentles S."/>
            <person name="Goble A."/>
            <person name="Hamlin N."/>
            <person name="Harris D.E."/>
            <person name="Hidalgo J."/>
            <person name="Hodgson G."/>
            <person name="Holroyd S."/>
            <person name="Hornsby T."/>
            <person name="Howarth S."/>
            <person name="Huckle E.J."/>
            <person name="Hunt S."/>
            <person name="Jagels K."/>
            <person name="James K.D."/>
            <person name="Jones L."/>
            <person name="Jones M."/>
            <person name="Leather S."/>
            <person name="McDonald S."/>
            <person name="McLean J."/>
            <person name="Mooney P."/>
            <person name="Moule S."/>
            <person name="Mungall K.L."/>
            <person name="Murphy L.D."/>
            <person name="Niblett D."/>
            <person name="Odell C."/>
            <person name="Oliver K."/>
            <person name="O'Neil S."/>
            <person name="Pearson D."/>
            <person name="Quail M.A."/>
            <person name="Rabbinowitsch E."/>
            <person name="Rutherford K.M."/>
            <person name="Rutter S."/>
            <person name="Saunders D."/>
            <person name="Seeger K."/>
            <person name="Sharp S."/>
            <person name="Skelton J."/>
            <person name="Simmonds M.N."/>
            <person name="Squares R."/>
            <person name="Squares S."/>
            <person name="Stevens K."/>
            <person name="Taylor K."/>
            <person name="Taylor R.G."/>
            <person name="Tivey A."/>
            <person name="Walsh S.V."/>
            <person name="Warren T."/>
            <person name="Whitehead S."/>
            <person name="Woodward J.R."/>
            <person name="Volckaert G."/>
            <person name="Aert R."/>
            <person name="Robben J."/>
            <person name="Grymonprez B."/>
            <person name="Weltjens I."/>
            <person name="Vanstreels E."/>
            <person name="Rieger M."/>
            <person name="Schaefer M."/>
            <person name="Mueller-Auer S."/>
            <person name="Gabel C."/>
            <person name="Fuchs M."/>
            <person name="Duesterhoeft A."/>
            <person name="Fritzc C."/>
            <person name="Holzer E."/>
            <person name="Moestl D."/>
            <person name="Hilbert H."/>
            <person name="Borzym K."/>
            <person name="Langer I."/>
            <person name="Beck A."/>
            <person name="Lehrach H."/>
            <person name="Reinhardt R."/>
            <person name="Pohl T.M."/>
            <person name="Eger P."/>
            <person name="Zimmermann W."/>
            <person name="Wedler H."/>
            <person name="Wambutt R."/>
            <person name="Purnelle B."/>
            <person name="Goffeau A."/>
            <person name="Cadieu E."/>
            <person name="Dreano S."/>
            <person name="Gloux S."/>
            <person name="Lelaure V."/>
            <person name="Mottier S."/>
            <person name="Galibert F."/>
            <person name="Aves S.J."/>
            <person name="Xiang Z."/>
            <person name="Hunt C."/>
            <person name="Moore K."/>
            <person name="Hurst S.M."/>
            <person name="Lucas M."/>
            <person name="Rochet M."/>
            <person name="Gaillardin C."/>
            <person name="Tallada V.A."/>
            <person name="Garzon A."/>
            <person name="Thode G."/>
            <person name="Daga R.R."/>
            <person name="Cruzado L."/>
            <person name="Jimenez J."/>
            <person name="Sanchez M."/>
            <person name="del Rey F."/>
            <person name="Benito J."/>
            <person name="Dominguez A."/>
            <person name="Revuelta J.L."/>
            <person name="Moreno S."/>
            <person name="Armstrong J."/>
            <person name="Forsburg S.L."/>
            <person name="Cerutti L."/>
            <person name="Lowe T."/>
            <person name="McCombie W.R."/>
            <person name="Paulsen I."/>
            <person name="Potashkin J."/>
            <person name="Shpakovski G.V."/>
            <person name="Ussery D."/>
            <person name="Barrell B.G."/>
            <person name="Nurse P."/>
        </authorList>
    </citation>
    <scope>NUCLEOTIDE SEQUENCE [LARGE SCALE GENOMIC DNA]</scope>
    <source>
        <strain>972 / ATCC 24843</strain>
    </source>
</reference>
<reference key="2">
    <citation type="journal article" date="2002" name="Mol. Biol. Cell">
        <title>The Schizosaccharomyces pombe aurora-related kinase Ark1 interacts with the inner centromere protein Pic1 and mediates chromosome segregation and cytokinesis.</title>
        <authorList>
            <person name="Leverson J.D."/>
            <person name="Huang H.-K."/>
            <person name="Forsburg S.L."/>
            <person name="Hunter T."/>
        </authorList>
    </citation>
    <scope>INTERACTION WITH ARK1</scope>
</reference>
<reference key="3">
    <citation type="journal article" date="2005" name="Mol. Cell. Biol.">
        <title>Suppressors of Bir1p (Survivin) identify roles for the chromosomal passenger protein Pic1p (INCENP) and the replication initiation factor Psf2p in chromosome segregation.</title>
        <authorList>
            <person name="Huang H.-K."/>
            <person name="Bailis J.M."/>
            <person name="Leverson J.D."/>
            <person name="Gomez E.B."/>
            <person name="Forsburg S.L."/>
            <person name="Hunter T."/>
        </authorList>
    </citation>
    <scope>FUNCTION</scope>
    <scope>INTERACTION WITH ARK1</scope>
    <scope>SUBCELLULAR LOCATION</scope>
</reference>
<reference key="4">
    <citation type="journal article" date="2006" name="Nat. Biotechnol.">
        <title>ORFeome cloning and global analysis of protein localization in the fission yeast Schizosaccharomyces pombe.</title>
        <authorList>
            <person name="Matsuyama A."/>
            <person name="Arai R."/>
            <person name="Yashiroda Y."/>
            <person name="Shirai A."/>
            <person name="Kamata A."/>
            <person name="Sekido S."/>
            <person name="Kobayashi Y."/>
            <person name="Hashimoto A."/>
            <person name="Hamamoto M."/>
            <person name="Hiraoka Y."/>
            <person name="Horinouchi S."/>
            <person name="Yoshida M."/>
        </authorList>
    </citation>
    <scope>SUBCELLULAR LOCATION [LARGE SCALE ANALYSIS]</scope>
</reference>
<reference key="5">
    <citation type="journal article" date="2008" name="J. Proteome Res.">
        <title>Phosphoproteome analysis of fission yeast.</title>
        <authorList>
            <person name="Wilson-Grady J.T."/>
            <person name="Villen J."/>
            <person name="Gygi S.P."/>
        </authorList>
    </citation>
    <scope>PHOSPHORYLATION [LARGE SCALE ANALYSIS] AT SER-171</scope>
    <scope>IDENTIFICATION BY MASS SPECTROMETRY</scope>
</reference>
<organism>
    <name type="scientific">Schizosaccharomyces pombe (strain 972 / ATCC 24843)</name>
    <name type="common">Fission yeast</name>
    <dbReference type="NCBI Taxonomy" id="284812"/>
    <lineage>
        <taxon>Eukaryota</taxon>
        <taxon>Fungi</taxon>
        <taxon>Dikarya</taxon>
        <taxon>Ascomycota</taxon>
        <taxon>Taphrinomycotina</taxon>
        <taxon>Schizosaccharomycetes</taxon>
        <taxon>Schizosaccharomycetales</taxon>
        <taxon>Schizosaccharomycetaceae</taxon>
        <taxon>Schizosaccharomyces</taxon>
    </lineage>
</organism>
<comment type="function">
    <text evidence="2">Component of the chromosomal passenger complex (CPC), a complex that acts as a key regulator of mitosis. Has a role in sister chromatid cohesion and condensation.</text>
</comment>
<comment type="subunit">
    <text evidence="5 6">Component of the CPC complex at least composed of ark1, bir1 and pic1.</text>
</comment>
<comment type="subcellular location">
    <subcellularLocation>
        <location evidence="2">Nucleus</location>
    </subcellularLocation>
    <subcellularLocation>
        <location evidence="2">Cytoplasm</location>
        <location evidence="2">Cytoskeleton</location>
        <location evidence="2">Spindle</location>
    </subcellularLocation>
    <text evidence="2">Associates with the elongating spindle during anaphase.</text>
</comment>
<comment type="similarity">
    <text evidence="4">Belongs to the INCENP family.</text>
</comment>
<name>INCE_SCHPO</name>
<proteinExistence type="evidence at protein level"/>
<sequence>MGSNGSELWFNKELEYSQQLTNGKMKEFFFLVSETMDWLNEHMLEVSKLQLESDIYELVRTPTKIKEKYSTPRLSPVHRCALPTPRMRLTSIQHQLEEAAVEGYKSGESNTVKEPKELHTATNTETQFDDDRDSTKLSSEYVKDDIVNKSTKGGVSPIKETRLPTNLPAFSPTSVERRFTEWNVPLRETSPSPSETADSPNKLPKQKHPAYSFVTLPKREEILKRPASLHSRVESTNSFINQLNRRRTKDNLTNNPEISLDEPIKALPSTTSDAPSSLLNTNVSSSPSKFRKFLSSVIPAKTDLSAKESLTSSTRLSTSYKTRKRSSGVAFSSETVTSSSKERKRSVENEMLKPHPTIFESPPEITSFDKSNAVEAEALTAKLKSNEERLPVSSQPGSDAKSQEFDFFEAKIPDSIAKLNELTASNENHYELKTYDRAERLRQKIQEVSSNKRLIPSTPPTKKPINAVLDAAKNSAAKDLHLAKMKLNNKNDESSLSPAKSHAVITQAPKIPLISTFTRLSTRKSSNDFNSSNSRPSSNALKSDANENTDSSLPPSKKEFIEKSLHKLSEPLHDDSRQNSDHNFAPHSRPIAIRVATASQRELEQTEKRKAKNGAANASNMESRSSENETHRFKKFYGKERELSNNEFPSRQTKTVTSANSSNIRDMEHTISDKPRSEPDAIPSSKSMHSNKPFEEKSEKPTTKRLVTNPSNVNASWHSNMLKRQEDLRKKKPLTDNGATSRHMLKSGLTRVTSKPTQRFANELAEDMSLAFHSTIPKKMEPDSVTSVTQPSVGSLRNNFDIGTTNSQNEDRKKKIAAQKNKNPVHGNVGLTNQHGFKTMHHNVNPFTKQNGIMKGKLPSSSTSQSNKPFIEKASMHAPAKGRNSSMQEPSSKSPLLKTPKSNYFPGYGSLSPNTSVELPEINSDYSDDSDDEGNKKKVNLPSWAESPELREQLKRQQKWDPDKIFGMIKPLQMDEYFRSKDRSKIRFRPRSSSADWSSQDRLTQAEIDNYKKNMGFL</sequence>
<feature type="chain" id="PRO_0000255436" description="Inner centromere protein pic1">
    <location>
        <begin position="1"/>
        <end position="1018"/>
    </location>
</feature>
<feature type="region of interest" description="Disordered" evidence="1">
    <location>
        <begin position="184"/>
        <end position="207"/>
    </location>
</feature>
<feature type="region of interest" description="Disordered" evidence="1">
    <location>
        <begin position="247"/>
        <end position="287"/>
    </location>
</feature>
<feature type="region of interest" description="Disordered" evidence="1">
    <location>
        <begin position="306"/>
        <end position="365"/>
    </location>
</feature>
<feature type="region of interest" description="Disordered" evidence="1">
    <location>
        <begin position="522"/>
        <end position="556"/>
    </location>
</feature>
<feature type="region of interest" description="Disordered" evidence="1">
    <location>
        <begin position="570"/>
        <end position="756"/>
    </location>
</feature>
<feature type="region of interest" description="Disordered" evidence="1">
    <location>
        <begin position="781"/>
        <end position="813"/>
    </location>
</feature>
<feature type="region of interest" description="Disordered" evidence="1">
    <location>
        <begin position="848"/>
        <end position="867"/>
    </location>
</feature>
<feature type="region of interest" description="Disordered" evidence="1">
    <location>
        <begin position="877"/>
        <end position="944"/>
    </location>
</feature>
<feature type="compositionally biased region" description="Polar residues" evidence="1">
    <location>
        <begin position="189"/>
        <end position="199"/>
    </location>
</feature>
<feature type="compositionally biased region" description="Polar residues" evidence="1">
    <location>
        <begin position="268"/>
        <end position="287"/>
    </location>
</feature>
<feature type="compositionally biased region" description="Low complexity" evidence="1">
    <location>
        <begin position="309"/>
        <end position="320"/>
    </location>
</feature>
<feature type="compositionally biased region" description="Polar residues" evidence="1">
    <location>
        <begin position="329"/>
        <end position="339"/>
    </location>
</feature>
<feature type="compositionally biased region" description="Polar residues" evidence="1">
    <location>
        <begin position="522"/>
        <end position="554"/>
    </location>
</feature>
<feature type="compositionally biased region" description="Basic and acidic residues" evidence="1">
    <location>
        <begin position="570"/>
        <end position="580"/>
    </location>
</feature>
<feature type="compositionally biased region" description="Basic and acidic residues" evidence="1">
    <location>
        <begin position="624"/>
        <end position="644"/>
    </location>
</feature>
<feature type="compositionally biased region" description="Polar residues" evidence="1">
    <location>
        <begin position="645"/>
        <end position="664"/>
    </location>
</feature>
<feature type="compositionally biased region" description="Basic and acidic residues" evidence="1">
    <location>
        <begin position="665"/>
        <end position="679"/>
    </location>
</feature>
<feature type="compositionally biased region" description="Basic and acidic residues" evidence="1">
    <location>
        <begin position="692"/>
        <end position="702"/>
    </location>
</feature>
<feature type="compositionally biased region" description="Polar residues" evidence="1">
    <location>
        <begin position="705"/>
        <end position="719"/>
    </location>
</feature>
<feature type="compositionally biased region" description="Polar residues" evidence="1">
    <location>
        <begin position="784"/>
        <end position="808"/>
    </location>
</feature>
<feature type="compositionally biased region" description="Low complexity" evidence="1">
    <location>
        <begin position="890"/>
        <end position="902"/>
    </location>
</feature>
<feature type="modified residue" description="Phosphoserine" evidence="3">
    <location>
        <position position="171"/>
    </location>
</feature>
<keyword id="KW-0159">Chromosome partition</keyword>
<keyword id="KW-0963">Cytoplasm</keyword>
<keyword id="KW-0206">Cytoskeleton</keyword>
<keyword id="KW-0539">Nucleus</keyword>
<keyword id="KW-0597">Phosphoprotein</keyword>
<keyword id="KW-1185">Reference proteome</keyword>
<dbReference type="EMBL" id="CU329671">
    <property type="protein sequence ID" value="CAB58167.2"/>
    <property type="molecule type" value="Genomic_DNA"/>
</dbReference>
<dbReference type="PIR" id="T40253">
    <property type="entry name" value="T40253"/>
</dbReference>
<dbReference type="RefSeq" id="NP_596135.2">
    <property type="nucleotide sequence ID" value="NM_001022053.2"/>
</dbReference>
<dbReference type="BioGRID" id="276782">
    <property type="interactions" value="8"/>
</dbReference>
<dbReference type="DIP" id="DIP-59225N"/>
<dbReference type="FunCoup" id="Q1MTN3">
    <property type="interactions" value="31"/>
</dbReference>
<dbReference type="IntAct" id="Q1MTN3">
    <property type="interactions" value="1"/>
</dbReference>
<dbReference type="STRING" id="284812.Q1MTN3"/>
<dbReference type="iPTMnet" id="Q1MTN3"/>
<dbReference type="PaxDb" id="4896-SPBC336.15.1"/>
<dbReference type="EnsemblFungi" id="SPBC336.15.1">
    <property type="protein sequence ID" value="SPBC336.15.1:pep"/>
    <property type="gene ID" value="SPBC336.15"/>
</dbReference>
<dbReference type="GeneID" id="2540250"/>
<dbReference type="KEGG" id="spo:2540250"/>
<dbReference type="PomBase" id="SPBC336.15">
    <property type="gene designation" value="pic1"/>
</dbReference>
<dbReference type="VEuPathDB" id="FungiDB:SPBC336.15"/>
<dbReference type="eggNOG" id="KOG1181">
    <property type="taxonomic scope" value="Eukaryota"/>
</dbReference>
<dbReference type="HOGENOM" id="CLU_296495_0_0_1"/>
<dbReference type="InParanoid" id="Q1MTN3"/>
<dbReference type="OMA" id="TMDWLNE"/>
<dbReference type="PhylomeDB" id="Q1MTN3"/>
<dbReference type="PRO" id="PR:Q1MTN3"/>
<dbReference type="Proteomes" id="UP000002485">
    <property type="component" value="Chromosome II"/>
</dbReference>
<dbReference type="GO" id="GO:0032133">
    <property type="term" value="C:chromosome passenger complex"/>
    <property type="evidence" value="ECO:0000304"/>
    <property type="project" value="PomBase"/>
</dbReference>
<dbReference type="GO" id="GO:0005737">
    <property type="term" value="C:cytoplasm"/>
    <property type="evidence" value="ECO:0007669"/>
    <property type="project" value="UniProtKB-KW"/>
</dbReference>
<dbReference type="GO" id="GO:0000776">
    <property type="term" value="C:kinetochore"/>
    <property type="evidence" value="ECO:0000314"/>
    <property type="project" value="PomBase"/>
</dbReference>
<dbReference type="GO" id="GO:0072686">
    <property type="term" value="C:mitotic spindle"/>
    <property type="evidence" value="ECO:0000314"/>
    <property type="project" value="PomBase"/>
</dbReference>
<dbReference type="GO" id="GO:0005634">
    <property type="term" value="C:nucleus"/>
    <property type="evidence" value="ECO:0007005"/>
    <property type="project" value="PomBase"/>
</dbReference>
<dbReference type="GO" id="GO:0000070">
    <property type="term" value="P:mitotic sister chromatid segregation"/>
    <property type="evidence" value="ECO:0000315"/>
    <property type="project" value="PomBase"/>
</dbReference>
<dbReference type="GO" id="GO:1902412">
    <property type="term" value="P:regulation of mitotic cytokinesis"/>
    <property type="evidence" value="ECO:0000315"/>
    <property type="project" value="PomBase"/>
</dbReference>
<dbReference type="InterPro" id="IPR005635">
    <property type="entry name" value="Inner_centromere_prot_ARK-bd"/>
</dbReference>
<dbReference type="PANTHER" id="PTHR13142">
    <property type="entry name" value="INNER CENTROMERE PROTEIN"/>
    <property type="match status" value="1"/>
</dbReference>
<dbReference type="PANTHER" id="PTHR13142:SF1">
    <property type="entry name" value="INNER CENTROMERE PROTEIN"/>
    <property type="match status" value="1"/>
</dbReference>
<dbReference type="Pfam" id="PF03941">
    <property type="entry name" value="INCENP_ARK-bind"/>
    <property type="match status" value="1"/>
</dbReference>
<accession>Q1MTN3</accession>
<accession>Q9UST0</accession>
<accession>Q9Y7L3</accession>
<evidence type="ECO:0000256" key="1">
    <source>
        <dbReference type="SAM" id="MobiDB-lite"/>
    </source>
</evidence>
<evidence type="ECO:0000269" key="2">
    <source>
    </source>
</evidence>
<evidence type="ECO:0000269" key="3">
    <source>
    </source>
</evidence>
<evidence type="ECO:0000305" key="4"/>
<evidence type="ECO:0000305" key="5">
    <source>
    </source>
</evidence>
<evidence type="ECO:0000305" key="6">
    <source>
    </source>
</evidence>
<protein>
    <recommendedName>
        <fullName>Inner centromere protein pic1</fullName>
        <shortName>INCENP-related protein pic1</shortName>
    </recommendedName>
</protein>